<proteinExistence type="inferred from homology"/>
<feature type="chain" id="PRO_0000163345" description="Ribosome maturation factor RimM">
    <location>
        <begin position="1"/>
        <end position="182"/>
    </location>
</feature>
<feature type="domain" description="PRC barrel" evidence="1">
    <location>
        <begin position="103"/>
        <end position="182"/>
    </location>
</feature>
<name>RIMM_SALPA</name>
<keyword id="KW-0143">Chaperone</keyword>
<keyword id="KW-0963">Cytoplasm</keyword>
<keyword id="KW-0690">Ribosome biogenesis</keyword>
<keyword id="KW-0698">rRNA processing</keyword>
<reference key="1">
    <citation type="journal article" date="2004" name="Nat. Genet.">
        <title>Comparison of genome degradation in Paratyphi A and Typhi, human-restricted serovars of Salmonella enterica that cause typhoid.</title>
        <authorList>
            <person name="McClelland M."/>
            <person name="Sanderson K.E."/>
            <person name="Clifton S.W."/>
            <person name="Latreille P."/>
            <person name="Porwollik S."/>
            <person name="Sabo A."/>
            <person name="Meyer R."/>
            <person name="Bieri T."/>
            <person name="Ozersky P."/>
            <person name="McLellan M."/>
            <person name="Harkins C.R."/>
            <person name="Wang C."/>
            <person name="Nguyen C."/>
            <person name="Berghoff A."/>
            <person name="Elliott G."/>
            <person name="Kohlberg S."/>
            <person name="Strong C."/>
            <person name="Du F."/>
            <person name="Carter J."/>
            <person name="Kremizki C."/>
            <person name="Layman D."/>
            <person name="Leonard S."/>
            <person name="Sun H."/>
            <person name="Fulton L."/>
            <person name="Nash W."/>
            <person name="Miner T."/>
            <person name="Minx P."/>
            <person name="Delehaunty K."/>
            <person name="Fronick C."/>
            <person name="Magrini V."/>
            <person name="Nhan M."/>
            <person name="Warren W."/>
            <person name="Florea L."/>
            <person name="Spieth J."/>
            <person name="Wilson R.K."/>
        </authorList>
    </citation>
    <scope>NUCLEOTIDE SEQUENCE [LARGE SCALE GENOMIC DNA]</scope>
    <source>
        <strain>ATCC 9150 / SARB42</strain>
    </source>
</reference>
<evidence type="ECO:0000255" key="1">
    <source>
        <dbReference type="HAMAP-Rule" id="MF_00014"/>
    </source>
</evidence>
<protein>
    <recommendedName>
        <fullName evidence="1">Ribosome maturation factor RimM</fullName>
    </recommendedName>
</protein>
<accession>Q5PFF7</accession>
<sequence length="182" mass="20468">MSKQLAAQVPAEPVVLGKMGSSYGIRGWLRVFSSTEDAESIFDYQPWFIQKAGQWQQVQLESWKHHNQDLIIKLKGVDDRDAANLLTNCEIVVDSSQLPALEEGDYYWKDLMGCQVVTAEGYDLGKVIDMMETGSNDVLVIKANLKDAFGIKERLVPFLDGQVIKKVDLATRTIEVDWDPGF</sequence>
<dbReference type="EMBL" id="CP000026">
    <property type="protein sequence ID" value="AAV78403.1"/>
    <property type="molecule type" value="Genomic_DNA"/>
</dbReference>
<dbReference type="RefSeq" id="WP_000043266.1">
    <property type="nucleotide sequence ID" value="NC_006511.1"/>
</dbReference>
<dbReference type="SMR" id="Q5PFF7"/>
<dbReference type="KEGG" id="spt:SPA2534"/>
<dbReference type="HOGENOM" id="CLU_077636_1_0_6"/>
<dbReference type="Proteomes" id="UP000008185">
    <property type="component" value="Chromosome"/>
</dbReference>
<dbReference type="GO" id="GO:0005737">
    <property type="term" value="C:cytoplasm"/>
    <property type="evidence" value="ECO:0007669"/>
    <property type="project" value="UniProtKB-SubCell"/>
</dbReference>
<dbReference type="GO" id="GO:0005840">
    <property type="term" value="C:ribosome"/>
    <property type="evidence" value="ECO:0007669"/>
    <property type="project" value="InterPro"/>
</dbReference>
<dbReference type="GO" id="GO:0043022">
    <property type="term" value="F:ribosome binding"/>
    <property type="evidence" value="ECO:0007669"/>
    <property type="project" value="InterPro"/>
</dbReference>
<dbReference type="GO" id="GO:0042274">
    <property type="term" value="P:ribosomal small subunit biogenesis"/>
    <property type="evidence" value="ECO:0007669"/>
    <property type="project" value="UniProtKB-UniRule"/>
</dbReference>
<dbReference type="GO" id="GO:0006364">
    <property type="term" value="P:rRNA processing"/>
    <property type="evidence" value="ECO:0007669"/>
    <property type="project" value="UniProtKB-UniRule"/>
</dbReference>
<dbReference type="FunFam" id="2.30.30.240:FF:000001">
    <property type="entry name" value="Ribosome maturation factor RimM"/>
    <property type="match status" value="1"/>
</dbReference>
<dbReference type="FunFam" id="2.40.30.60:FF:000001">
    <property type="entry name" value="Ribosome maturation factor RimM"/>
    <property type="match status" value="1"/>
</dbReference>
<dbReference type="Gene3D" id="2.30.30.240">
    <property type="entry name" value="PRC-barrel domain"/>
    <property type="match status" value="1"/>
</dbReference>
<dbReference type="Gene3D" id="2.40.30.60">
    <property type="entry name" value="RimM"/>
    <property type="match status" value="1"/>
</dbReference>
<dbReference type="HAMAP" id="MF_00014">
    <property type="entry name" value="Ribosome_mat_RimM"/>
    <property type="match status" value="1"/>
</dbReference>
<dbReference type="InterPro" id="IPR011033">
    <property type="entry name" value="PRC_barrel-like_sf"/>
</dbReference>
<dbReference type="InterPro" id="IPR056792">
    <property type="entry name" value="PRC_RimM"/>
</dbReference>
<dbReference type="InterPro" id="IPR011961">
    <property type="entry name" value="RimM"/>
</dbReference>
<dbReference type="InterPro" id="IPR002676">
    <property type="entry name" value="RimM_N"/>
</dbReference>
<dbReference type="InterPro" id="IPR036976">
    <property type="entry name" value="RimM_N_sf"/>
</dbReference>
<dbReference type="InterPro" id="IPR009000">
    <property type="entry name" value="Transl_B-barrel_sf"/>
</dbReference>
<dbReference type="NCBIfam" id="TIGR02273">
    <property type="entry name" value="16S_RimM"/>
    <property type="match status" value="1"/>
</dbReference>
<dbReference type="PANTHER" id="PTHR33692">
    <property type="entry name" value="RIBOSOME MATURATION FACTOR RIMM"/>
    <property type="match status" value="1"/>
</dbReference>
<dbReference type="PANTHER" id="PTHR33692:SF1">
    <property type="entry name" value="RIBOSOME MATURATION FACTOR RIMM"/>
    <property type="match status" value="1"/>
</dbReference>
<dbReference type="Pfam" id="PF24986">
    <property type="entry name" value="PRC_RimM"/>
    <property type="match status" value="1"/>
</dbReference>
<dbReference type="Pfam" id="PF01782">
    <property type="entry name" value="RimM"/>
    <property type="match status" value="1"/>
</dbReference>
<dbReference type="SUPFAM" id="SSF50346">
    <property type="entry name" value="PRC-barrel domain"/>
    <property type="match status" value="1"/>
</dbReference>
<dbReference type="SUPFAM" id="SSF50447">
    <property type="entry name" value="Translation proteins"/>
    <property type="match status" value="1"/>
</dbReference>
<gene>
    <name evidence="1" type="primary">rimM</name>
    <name type="ordered locus">SPA2534</name>
</gene>
<organism>
    <name type="scientific">Salmonella paratyphi A (strain ATCC 9150 / SARB42)</name>
    <dbReference type="NCBI Taxonomy" id="295319"/>
    <lineage>
        <taxon>Bacteria</taxon>
        <taxon>Pseudomonadati</taxon>
        <taxon>Pseudomonadota</taxon>
        <taxon>Gammaproteobacteria</taxon>
        <taxon>Enterobacterales</taxon>
        <taxon>Enterobacteriaceae</taxon>
        <taxon>Salmonella</taxon>
    </lineage>
</organism>
<comment type="function">
    <text evidence="1">An accessory protein needed during the final step in the assembly of 30S ribosomal subunit, possibly for assembly of the head region. Essential for efficient processing of 16S rRNA. May be needed both before and after RbfA during the maturation of 16S rRNA. It has affinity for free ribosomal 30S subunits but not for 70S ribosomes.</text>
</comment>
<comment type="subunit">
    <text evidence="1">Binds ribosomal protein uS19.</text>
</comment>
<comment type="subcellular location">
    <subcellularLocation>
        <location evidence="1">Cytoplasm</location>
    </subcellularLocation>
</comment>
<comment type="domain">
    <text evidence="1">The PRC barrel domain binds ribosomal protein uS19.</text>
</comment>
<comment type="similarity">
    <text evidence="1">Belongs to the RimM family.</text>
</comment>